<dbReference type="EMBL" id="CP000919">
    <property type="protein sequence ID" value="ACO19431.1"/>
    <property type="molecule type" value="Genomic_DNA"/>
</dbReference>
<dbReference type="RefSeq" id="WP_000106346.1">
    <property type="nucleotide sequence ID" value="NC_012466.1"/>
</dbReference>
<dbReference type="SMR" id="C1CFF2"/>
<dbReference type="GeneID" id="45653193"/>
<dbReference type="KEGG" id="sjj:SPJ_1475"/>
<dbReference type="HOGENOM" id="CLU_014218_8_2_9"/>
<dbReference type="Proteomes" id="UP000002206">
    <property type="component" value="Chromosome"/>
</dbReference>
<dbReference type="GO" id="GO:0009376">
    <property type="term" value="C:HslUV protease complex"/>
    <property type="evidence" value="ECO:0007669"/>
    <property type="project" value="TreeGrafter"/>
</dbReference>
<dbReference type="GO" id="GO:0005524">
    <property type="term" value="F:ATP binding"/>
    <property type="evidence" value="ECO:0007669"/>
    <property type="project" value="UniProtKB-UniRule"/>
</dbReference>
<dbReference type="GO" id="GO:0016887">
    <property type="term" value="F:ATP hydrolysis activity"/>
    <property type="evidence" value="ECO:0007669"/>
    <property type="project" value="InterPro"/>
</dbReference>
<dbReference type="GO" id="GO:0140662">
    <property type="term" value="F:ATP-dependent protein folding chaperone"/>
    <property type="evidence" value="ECO:0007669"/>
    <property type="project" value="InterPro"/>
</dbReference>
<dbReference type="GO" id="GO:0046983">
    <property type="term" value="F:protein dimerization activity"/>
    <property type="evidence" value="ECO:0007669"/>
    <property type="project" value="InterPro"/>
</dbReference>
<dbReference type="GO" id="GO:0051082">
    <property type="term" value="F:unfolded protein binding"/>
    <property type="evidence" value="ECO:0007669"/>
    <property type="project" value="UniProtKB-UniRule"/>
</dbReference>
<dbReference type="GO" id="GO:0008270">
    <property type="term" value="F:zinc ion binding"/>
    <property type="evidence" value="ECO:0007669"/>
    <property type="project" value="InterPro"/>
</dbReference>
<dbReference type="GO" id="GO:0051301">
    <property type="term" value="P:cell division"/>
    <property type="evidence" value="ECO:0007669"/>
    <property type="project" value="TreeGrafter"/>
</dbReference>
<dbReference type="GO" id="GO:0051603">
    <property type="term" value="P:proteolysis involved in protein catabolic process"/>
    <property type="evidence" value="ECO:0007669"/>
    <property type="project" value="TreeGrafter"/>
</dbReference>
<dbReference type="CDD" id="cd19497">
    <property type="entry name" value="RecA-like_ClpX"/>
    <property type="match status" value="1"/>
</dbReference>
<dbReference type="FunFam" id="1.10.8.60:FF:000002">
    <property type="entry name" value="ATP-dependent Clp protease ATP-binding subunit ClpX"/>
    <property type="match status" value="1"/>
</dbReference>
<dbReference type="FunFam" id="3.40.50.300:FF:000005">
    <property type="entry name" value="ATP-dependent Clp protease ATP-binding subunit ClpX"/>
    <property type="match status" value="1"/>
</dbReference>
<dbReference type="Gene3D" id="1.10.8.60">
    <property type="match status" value="1"/>
</dbReference>
<dbReference type="Gene3D" id="6.20.220.10">
    <property type="entry name" value="ClpX chaperone, C4-type zinc finger domain"/>
    <property type="match status" value="1"/>
</dbReference>
<dbReference type="Gene3D" id="3.40.50.300">
    <property type="entry name" value="P-loop containing nucleotide triphosphate hydrolases"/>
    <property type="match status" value="1"/>
</dbReference>
<dbReference type="HAMAP" id="MF_00175">
    <property type="entry name" value="ClpX"/>
    <property type="match status" value="1"/>
</dbReference>
<dbReference type="InterPro" id="IPR003593">
    <property type="entry name" value="AAA+_ATPase"/>
</dbReference>
<dbReference type="InterPro" id="IPR050052">
    <property type="entry name" value="ATP-dep_Clp_protease_ClpX"/>
</dbReference>
<dbReference type="InterPro" id="IPR003959">
    <property type="entry name" value="ATPase_AAA_core"/>
</dbReference>
<dbReference type="InterPro" id="IPR019489">
    <property type="entry name" value="Clp_ATPase_C"/>
</dbReference>
<dbReference type="InterPro" id="IPR004487">
    <property type="entry name" value="Clp_protease_ATP-bd_su_ClpX"/>
</dbReference>
<dbReference type="InterPro" id="IPR046425">
    <property type="entry name" value="ClpX_bact"/>
</dbReference>
<dbReference type="InterPro" id="IPR027417">
    <property type="entry name" value="P-loop_NTPase"/>
</dbReference>
<dbReference type="InterPro" id="IPR010603">
    <property type="entry name" value="Znf_CppX_C4"/>
</dbReference>
<dbReference type="InterPro" id="IPR038366">
    <property type="entry name" value="Znf_CppX_C4_sf"/>
</dbReference>
<dbReference type="NCBIfam" id="TIGR00382">
    <property type="entry name" value="clpX"/>
    <property type="match status" value="1"/>
</dbReference>
<dbReference type="NCBIfam" id="NF003745">
    <property type="entry name" value="PRK05342.1"/>
    <property type="match status" value="1"/>
</dbReference>
<dbReference type="PANTHER" id="PTHR48102:SF7">
    <property type="entry name" value="ATP-DEPENDENT CLP PROTEASE ATP-BINDING SUBUNIT CLPX-LIKE, MITOCHONDRIAL"/>
    <property type="match status" value="1"/>
</dbReference>
<dbReference type="PANTHER" id="PTHR48102">
    <property type="entry name" value="ATP-DEPENDENT CLP PROTEASE ATP-BINDING SUBUNIT CLPX-LIKE, MITOCHONDRIAL-RELATED"/>
    <property type="match status" value="1"/>
</dbReference>
<dbReference type="Pfam" id="PF07724">
    <property type="entry name" value="AAA_2"/>
    <property type="match status" value="1"/>
</dbReference>
<dbReference type="Pfam" id="PF10431">
    <property type="entry name" value="ClpB_D2-small"/>
    <property type="match status" value="1"/>
</dbReference>
<dbReference type="Pfam" id="PF06689">
    <property type="entry name" value="zf-C4_ClpX"/>
    <property type="match status" value="1"/>
</dbReference>
<dbReference type="SMART" id="SM00382">
    <property type="entry name" value="AAA"/>
    <property type="match status" value="1"/>
</dbReference>
<dbReference type="SMART" id="SM01086">
    <property type="entry name" value="ClpB_D2-small"/>
    <property type="match status" value="1"/>
</dbReference>
<dbReference type="SMART" id="SM00994">
    <property type="entry name" value="zf-C4_ClpX"/>
    <property type="match status" value="1"/>
</dbReference>
<dbReference type="SUPFAM" id="SSF57716">
    <property type="entry name" value="Glucocorticoid receptor-like (DNA-binding domain)"/>
    <property type="match status" value="1"/>
</dbReference>
<dbReference type="SUPFAM" id="SSF52540">
    <property type="entry name" value="P-loop containing nucleoside triphosphate hydrolases"/>
    <property type="match status" value="1"/>
</dbReference>
<dbReference type="PROSITE" id="PS51902">
    <property type="entry name" value="CLPX_ZB"/>
    <property type="match status" value="1"/>
</dbReference>
<reference key="1">
    <citation type="journal article" date="2010" name="Genome Biol.">
        <title>Structure and dynamics of the pan-genome of Streptococcus pneumoniae and closely related species.</title>
        <authorList>
            <person name="Donati C."/>
            <person name="Hiller N.L."/>
            <person name="Tettelin H."/>
            <person name="Muzzi A."/>
            <person name="Croucher N.J."/>
            <person name="Angiuoli S.V."/>
            <person name="Oggioni M."/>
            <person name="Dunning Hotopp J.C."/>
            <person name="Hu F.Z."/>
            <person name="Riley D.R."/>
            <person name="Covacci A."/>
            <person name="Mitchell T.J."/>
            <person name="Bentley S.D."/>
            <person name="Kilian M."/>
            <person name="Ehrlich G.D."/>
            <person name="Rappuoli R."/>
            <person name="Moxon E.R."/>
            <person name="Masignani V."/>
        </authorList>
    </citation>
    <scope>NUCLEOTIDE SEQUENCE [LARGE SCALE GENOMIC DNA]</scope>
    <source>
        <strain>JJA</strain>
    </source>
</reference>
<gene>
    <name evidence="1" type="primary">clpX</name>
    <name type="ordered locus">SPJ_1475</name>
</gene>
<accession>C1CFF2</accession>
<evidence type="ECO:0000255" key="1">
    <source>
        <dbReference type="HAMAP-Rule" id="MF_00175"/>
    </source>
</evidence>
<evidence type="ECO:0000255" key="2">
    <source>
        <dbReference type="PROSITE-ProRule" id="PRU01250"/>
    </source>
</evidence>
<keyword id="KW-0067">ATP-binding</keyword>
<keyword id="KW-0143">Chaperone</keyword>
<keyword id="KW-0479">Metal-binding</keyword>
<keyword id="KW-0547">Nucleotide-binding</keyword>
<keyword id="KW-0862">Zinc</keyword>
<feature type="chain" id="PRO_1000123855" description="ATP-dependent Clp protease ATP-binding subunit ClpX">
    <location>
        <begin position="1"/>
        <end position="410"/>
    </location>
</feature>
<feature type="domain" description="ClpX-type ZB" evidence="2">
    <location>
        <begin position="1"/>
        <end position="54"/>
    </location>
</feature>
<feature type="binding site" evidence="2">
    <location>
        <position position="13"/>
    </location>
    <ligand>
        <name>Zn(2+)</name>
        <dbReference type="ChEBI" id="CHEBI:29105"/>
    </ligand>
</feature>
<feature type="binding site" evidence="2">
    <location>
        <position position="16"/>
    </location>
    <ligand>
        <name>Zn(2+)</name>
        <dbReference type="ChEBI" id="CHEBI:29105"/>
    </ligand>
</feature>
<feature type="binding site" evidence="2">
    <location>
        <position position="35"/>
    </location>
    <ligand>
        <name>Zn(2+)</name>
        <dbReference type="ChEBI" id="CHEBI:29105"/>
    </ligand>
</feature>
<feature type="binding site" evidence="2">
    <location>
        <position position="38"/>
    </location>
    <ligand>
        <name>Zn(2+)</name>
        <dbReference type="ChEBI" id="CHEBI:29105"/>
    </ligand>
</feature>
<feature type="binding site" evidence="1">
    <location>
        <begin position="120"/>
        <end position="127"/>
    </location>
    <ligand>
        <name>ATP</name>
        <dbReference type="ChEBI" id="CHEBI:30616"/>
    </ligand>
</feature>
<comment type="function">
    <text evidence="1">ATP-dependent specificity component of the Clp protease. It directs the protease to specific substrates. Can perform chaperone functions in the absence of ClpP.</text>
</comment>
<comment type="subunit">
    <text evidence="1">Component of the ClpX-ClpP complex. Forms a hexameric ring that, in the presence of ATP, binds to fourteen ClpP subunits assembled into a disk-like structure with a central cavity, resembling the structure of eukaryotic proteasomes.</text>
</comment>
<comment type="similarity">
    <text evidence="1">Belongs to the ClpX chaperone family.</text>
</comment>
<organism>
    <name type="scientific">Streptococcus pneumoniae (strain JJA)</name>
    <dbReference type="NCBI Taxonomy" id="488222"/>
    <lineage>
        <taxon>Bacteria</taxon>
        <taxon>Bacillati</taxon>
        <taxon>Bacillota</taxon>
        <taxon>Bacilli</taxon>
        <taxon>Lactobacillales</taxon>
        <taxon>Streptococcaceae</taxon>
        <taxon>Streptococcus</taxon>
    </lineage>
</organism>
<name>CLPX_STRZJ</name>
<proteinExistence type="inferred from homology"/>
<protein>
    <recommendedName>
        <fullName evidence="1">ATP-dependent Clp protease ATP-binding subunit ClpX</fullName>
    </recommendedName>
</protein>
<sequence>MSTNRKNDMMVYCSFCGKNQEEVQKIIAGNNAFICNECVELAQEIIREELVEEVLADLSEVPKPIELLHILNHYVIGQDRAKRALAVAVYNHYKRINFHDTREESEDVDLQKSNILMIGPTGSGKTFLAQTLAKSLNVPFAIADATALTEAGYVGEDVENILLKLLQVADFNIERAERGIIYVDEIDKIAKKSENVSITRDVSGEGVQQALLKIIEGTVASVPPQGGRKHPQQEMIQVDTKNILFIVGGAFDGIEEIVKQRLGEKVIGFGQNNKAIDENSSYMQEIIAEDIQKFGIIPELIGRLPVFAALEQLTVDDLVRILKEPRNALVKQYQTLLSYDDVELEFDDEALQEIANKAIERKTGARGLRSIIEETMLDVMFEVPSQENVKLVRITKETVDGTDKPILETA</sequence>